<organism>
    <name type="scientific">Chloroflexus aurantiacus (strain ATCC 29366 / DSM 635 / J-10-fl)</name>
    <dbReference type="NCBI Taxonomy" id="324602"/>
    <lineage>
        <taxon>Bacteria</taxon>
        <taxon>Bacillati</taxon>
        <taxon>Chloroflexota</taxon>
        <taxon>Chloroflexia</taxon>
        <taxon>Chloroflexales</taxon>
        <taxon>Chloroflexineae</taxon>
        <taxon>Chloroflexaceae</taxon>
        <taxon>Chloroflexus</taxon>
    </lineage>
</organism>
<feature type="chain" id="PRO_1000094153" description="Transcription elongation factor GreA">
    <location>
        <begin position="1"/>
        <end position="157"/>
    </location>
</feature>
<feature type="coiled-coil region" evidence="1">
    <location>
        <begin position="47"/>
        <end position="75"/>
    </location>
</feature>
<dbReference type="EMBL" id="CP000909">
    <property type="protein sequence ID" value="ABY34456.1"/>
    <property type="molecule type" value="Genomic_DNA"/>
</dbReference>
<dbReference type="RefSeq" id="WP_012257112.1">
    <property type="nucleotide sequence ID" value="NC_010175.1"/>
</dbReference>
<dbReference type="RefSeq" id="YP_001634845.1">
    <property type="nucleotide sequence ID" value="NC_010175.1"/>
</dbReference>
<dbReference type="SMR" id="A9WK05"/>
<dbReference type="FunCoup" id="A9WK05">
    <property type="interactions" value="309"/>
</dbReference>
<dbReference type="STRING" id="324602.Caur_1227"/>
<dbReference type="EnsemblBacteria" id="ABY34456">
    <property type="protein sequence ID" value="ABY34456"/>
    <property type="gene ID" value="Caur_1227"/>
</dbReference>
<dbReference type="KEGG" id="cau:Caur_1227"/>
<dbReference type="PATRIC" id="fig|324602.8.peg.1409"/>
<dbReference type="eggNOG" id="COG0782">
    <property type="taxonomic scope" value="Bacteria"/>
</dbReference>
<dbReference type="HOGENOM" id="CLU_101379_2_1_0"/>
<dbReference type="InParanoid" id="A9WK05"/>
<dbReference type="Proteomes" id="UP000002008">
    <property type="component" value="Chromosome"/>
</dbReference>
<dbReference type="GO" id="GO:0003677">
    <property type="term" value="F:DNA binding"/>
    <property type="evidence" value="ECO:0007669"/>
    <property type="project" value="UniProtKB-UniRule"/>
</dbReference>
<dbReference type="GO" id="GO:0070063">
    <property type="term" value="F:RNA polymerase binding"/>
    <property type="evidence" value="ECO:0007669"/>
    <property type="project" value="InterPro"/>
</dbReference>
<dbReference type="GO" id="GO:0006354">
    <property type="term" value="P:DNA-templated transcription elongation"/>
    <property type="evidence" value="ECO:0000318"/>
    <property type="project" value="GO_Central"/>
</dbReference>
<dbReference type="GO" id="GO:0032784">
    <property type="term" value="P:regulation of DNA-templated transcription elongation"/>
    <property type="evidence" value="ECO:0007669"/>
    <property type="project" value="UniProtKB-UniRule"/>
</dbReference>
<dbReference type="FunFam" id="1.10.287.180:FF:000001">
    <property type="entry name" value="Transcription elongation factor GreA"/>
    <property type="match status" value="1"/>
</dbReference>
<dbReference type="FunFam" id="3.10.50.30:FF:000001">
    <property type="entry name" value="Transcription elongation factor GreA"/>
    <property type="match status" value="1"/>
</dbReference>
<dbReference type="Gene3D" id="3.10.50.30">
    <property type="entry name" value="Transcription elongation factor, GreA/GreB, C-terminal domain"/>
    <property type="match status" value="1"/>
</dbReference>
<dbReference type="Gene3D" id="1.10.287.180">
    <property type="entry name" value="Transcription elongation factor, GreA/GreB, N-terminal domain"/>
    <property type="match status" value="1"/>
</dbReference>
<dbReference type="HAMAP" id="MF_00105">
    <property type="entry name" value="GreA_GreB"/>
    <property type="match status" value="1"/>
</dbReference>
<dbReference type="InterPro" id="IPR036953">
    <property type="entry name" value="GreA/GreB_C_sf"/>
</dbReference>
<dbReference type="InterPro" id="IPR006359">
    <property type="entry name" value="Tscrpt_elong_fac_GreA"/>
</dbReference>
<dbReference type="InterPro" id="IPR028624">
    <property type="entry name" value="Tscrpt_elong_fac_GreA/B"/>
</dbReference>
<dbReference type="InterPro" id="IPR001437">
    <property type="entry name" value="Tscrpt_elong_fac_GreA/B_C"/>
</dbReference>
<dbReference type="InterPro" id="IPR023459">
    <property type="entry name" value="Tscrpt_elong_fac_GreA/B_fam"/>
</dbReference>
<dbReference type="InterPro" id="IPR022691">
    <property type="entry name" value="Tscrpt_elong_fac_GreA/B_N"/>
</dbReference>
<dbReference type="InterPro" id="IPR036805">
    <property type="entry name" value="Tscrpt_elong_fac_GreA/B_N_sf"/>
</dbReference>
<dbReference type="NCBIfam" id="TIGR01462">
    <property type="entry name" value="greA"/>
    <property type="match status" value="1"/>
</dbReference>
<dbReference type="NCBIfam" id="NF001263">
    <property type="entry name" value="PRK00226.1-4"/>
    <property type="match status" value="1"/>
</dbReference>
<dbReference type="PANTHER" id="PTHR30437">
    <property type="entry name" value="TRANSCRIPTION ELONGATION FACTOR GREA"/>
    <property type="match status" value="1"/>
</dbReference>
<dbReference type="PANTHER" id="PTHR30437:SF4">
    <property type="entry name" value="TRANSCRIPTION ELONGATION FACTOR GREA"/>
    <property type="match status" value="1"/>
</dbReference>
<dbReference type="Pfam" id="PF01272">
    <property type="entry name" value="GreA_GreB"/>
    <property type="match status" value="1"/>
</dbReference>
<dbReference type="Pfam" id="PF03449">
    <property type="entry name" value="GreA_GreB_N"/>
    <property type="match status" value="1"/>
</dbReference>
<dbReference type="PIRSF" id="PIRSF006092">
    <property type="entry name" value="GreA_GreB"/>
    <property type="match status" value="1"/>
</dbReference>
<dbReference type="SUPFAM" id="SSF54534">
    <property type="entry name" value="FKBP-like"/>
    <property type="match status" value="1"/>
</dbReference>
<dbReference type="SUPFAM" id="SSF46557">
    <property type="entry name" value="GreA transcript cleavage protein, N-terminal domain"/>
    <property type="match status" value="1"/>
</dbReference>
<evidence type="ECO:0000255" key="1">
    <source>
        <dbReference type="HAMAP-Rule" id="MF_00105"/>
    </source>
</evidence>
<reference key="1">
    <citation type="journal article" date="2011" name="BMC Genomics">
        <title>Complete genome sequence of the filamentous anoxygenic phototrophic bacterium Chloroflexus aurantiacus.</title>
        <authorList>
            <person name="Tang K.H."/>
            <person name="Barry K."/>
            <person name="Chertkov O."/>
            <person name="Dalin E."/>
            <person name="Han C.S."/>
            <person name="Hauser L.J."/>
            <person name="Honchak B.M."/>
            <person name="Karbach L.E."/>
            <person name="Land M.L."/>
            <person name="Lapidus A."/>
            <person name="Larimer F.W."/>
            <person name="Mikhailova N."/>
            <person name="Pitluck S."/>
            <person name="Pierson B.K."/>
            <person name="Blankenship R.E."/>
        </authorList>
    </citation>
    <scope>NUCLEOTIDE SEQUENCE [LARGE SCALE GENOMIC DNA]</scope>
    <source>
        <strain>ATCC 29366 / DSM 635 / J-10-fl</strain>
    </source>
</reference>
<name>GREA_CHLAA</name>
<comment type="function">
    <text evidence="1">Necessary for efficient RNA polymerase transcription elongation past template-encoded arresting sites. The arresting sites in DNA have the property of trapping a certain fraction of elongating RNA polymerases that pass through, resulting in locked ternary complexes. Cleavage of the nascent transcript by cleavage factors such as GreA or GreB allows the resumption of elongation from the new 3'terminus. GreA releases sequences of 2 to 3 nucleotides.</text>
</comment>
<comment type="similarity">
    <text evidence="1">Belongs to the GreA/GreB family.</text>
</comment>
<proteinExistence type="inferred from homology"/>
<sequence>MTEKPTYLTREGRARLEAELEYLTTVERKQIAERIAAAKELGDISESGEYEDAKKAQALLEGRIRELKHLLSRAEVIDEDQASNGEVRVGSSVTVRFEDDGTEETWTIVGSAEANPRQGRISNESPLGAALLGKRARNKVTVHTPSGVMKLTILKVR</sequence>
<keyword id="KW-0175">Coiled coil</keyword>
<keyword id="KW-0238">DNA-binding</keyword>
<keyword id="KW-1185">Reference proteome</keyword>
<keyword id="KW-0804">Transcription</keyword>
<keyword id="KW-0805">Transcription regulation</keyword>
<accession>A9WK05</accession>
<protein>
    <recommendedName>
        <fullName evidence="1">Transcription elongation factor GreA</fullName>
    </recommendedName>
    <alternativeName>
        <fullName evidence="1">Transcript cleavage factor GreA</fullName>
    </alternativeName>
</protein>
<gene>
    <name evidence="1" type="primary">greA</name>
    <name type="ordered locus">Caur_1227</name>
</gene>